<reference key="1">
    <citation type="journal article" date="1991" name="J. Biol. Chem.">
        <title>Murine polypyrimidine tract binding protein. Purification, cloning, and mapping of the RNA binding domain.</title>
        <authorList>
            <person name="Bothwell A.L.M."/>
            <person name="Ballard D.W."/>
            <person name="Philbrick W.M."/>
            <person name="Lindwall G."/>
            <person name="Maher S.E."/>
            <person name="Bridgett M.M."/>
            <person name="Jamison S.F."/>
            <person name="Garcia-Blanco M.A."/>
        </authorList>
    </citation>
    <scope>NUCLEOTIDE SEQUENCE [MRNA] (ISOFORM 2)</scope>
    <scope>PROTEIN SEQUENCE OF 338-367</scope>
</reference>
<reference evidence="10" key="2">
    <citation type="journal article" date="2005" name="Science">
        <title>The transcriptional landscape of the mammalian genome.</title>
        <authorList>
            <person name="Carninci P."/>
            <person name="Kasukawa T."/>
            <person name="Katayama S."/>
            <person name="Gough J."/>
            <person name="Frith M.C."/>
            <person name="Maeda N."/>
            <person name="Oyama R."/>
            <person name="Ravasi T."/>
            <person name="Lenhard B."/>
            <person name="Wells C."/>
            <person name="Kodzius R."/>
            <person name="Shimokawa K."/>
            <person name="Bajic V.B."/>
            <person name="Brenner S.E."/>
            <person name="Batalov S."/>
            <person name="Forrest A.R."/>
            <person name="Zavolan M."/>
            <person name="Davis M.J."/>
            <person name="Wilming L.G."/>
            <person name="Aidinis V."/>
            <person name="Allen J.E."/>
            <person name="Ambesi-Impiombato A."/>
            <person name="Apweiler R."/>
            <person name="Aturaliya R.N."/>
            <person name="Bailey T.L."/>
            <person name="Bansal M."/>
            <person name="Baxter L."/>
            <person name="Beisel K.W."/>
            <person name="Bersano T."/>
            <person name="Bono H."/>
            <person name="Chalk A.M."/>
            <person name="Chiu K.P."/>
            <person name="Choudhary V."/>
            <person name="Christoffels A."/>
            <person name="Clutterbuck D.R."/>
            <person name="Crowe M.L."/>
            <person name="Dalla E."/>
            <person name="Dalrymple B.P."/>
            <person name="de Bono B."/>
            <person name="Della Gatta G."/>
            <person name="di Bernardo D."/>
            <person name="Down T."/>
            <person name="Engstrom P."/>
            <person name="Fagiolini M."/>
            <person name="Faulkner G."/>
            <person name="Fletcher C.F."/>
            <person name="Fukushima T."/>
            <person name="Furuno M."/>
            <person name="Futaki S."/>
            <person name="Gariboldi M."/>
            <person name="Georgii-Hemming P."/>
            <person name="Gingeras T.R."/>
            <person name="Gojobori T."/>
            <person name="Green R.E."/>
            <person name="Gustincich S."/>
            <person name="Harbers M."/>
            <person name="Hayashi Y."/>
            <person name="Hensch T.K."/>
            <person name="Hirokawa N."/>
            <person name="Hill D."/>
            <person name="Huminiecki L."/>
            <person name="Iacono M."/>
            <person name="Ikeo K."/>
            <person name="Iwama A."/>
            <person name="Ishikawa T."/>
            <person name="Jakt M."/>
            <person name="Kanapin A."/>
            <person name="Katoh M."/>
            <person name="Kawasawa Y."/>
            <person name="Kelso J."/>
            <person name="Kitamura H."/>
            <person name="Kitano H."/>
            <person name="Kollias G."/>
            <person name="Krishnan S.P."/>
            <person name="Kruger A."/>
            <person name="Kummerfeld S.K."/>
            <person name="Kurochkin I.V."/>
            <person name="Lareau L.F."/>
            <person name="Lazarevic D."/>
            <person name="Lipovich L."/>
            <person name="Liu J."/>
            <person name="Liuni S."/>
            <person name="McWilliam S."/>
            <person name="Madan Babu M."/>
            <person name="Madera M."/>
            <person name="Marchionni L."/>
            <person name="Matsuda H."/>
            <person name="Matsuzawa S."/>
            <person name="Miki H."/>
            <person name="Mignone F."/>
            <person name="Miyake S."/>
            <person name="Morris K."/>
            <person name="Mottagui-Tabar S."/>
            <person name="Mulder N."/>
            <person name="Nakano N."/>
            <person name="Nakauchi H."/>
            <person name="Ng P."/>
            <person name="Nilsson R."/>
            <person name="Nishiguchi S."/>
            <person name="Nishikawa S."/>
            <person name="Nori F."/>
            <person name="Ohara O."/>
            <person name="Okazaki Y."/>
            <person name="Orlando V."/>
            <person name="Pang K.C."/>
            <person name="Pavan W.J."/>
            <person name="Pavesi G."/>
            <person name="Pesole G."/>
            <person name="Petrovsky N."/>
            <person name="Piazza S."/>
            <person name="Reed J."/>
            <person name="Reid J.F."/>
            <person name="Ring B.Z."/>
            <person name="Ringwald M."/>
            <person name="Rost B."/>
            <person name="Ruan Y."/>
            <person name="Salzberg S.L."/>
            <person name="Sandelin A."/>
            <person name="Schneider C."/>
            <person name="Schoenbach C."/>
            <person name="Sekiguchi K."/>
            <person name="Semple C.A."/>
            <person name="Seno S."/>
            <person name="Sessa L."/>
            <person name="Sheng Y."/>
            <person name="Shibata Y."/>
            <person name="Shimada H."/>
            <person name="Shimada K."/>
            <person name="Silva D."/>
            <person name="Sinclair B."/>
            <person name="Sperling S."/>
            <person name="Stupka E."/>
            <person name="Sugiura K."/>
            <person name="Sultana R."/>
            <person name="Takenaka Y."/>
            <person name="Taki K."/>
            <person name="Tammoja K."/>
            <person name="Tan S.L."/>
            <person name="Tang S."/>
            <person name="Taylor M.S."/>
            <person name="Tegner J."/>
            <person name="Teichmann S.A."/>
            <person name="Ueda H.R."/>
            <person name="van Nimwegen E."/>
            <person name="Verardo R."/>
            <person name="Wei C.L."/>
            <person name="Yagi K."/>
            <person name="Yamanishi H."/>
            <person name="Zabarovsky E."/>
            <person name="Zhu S."/>
            <person name="Zimmer A."/>
            <person name="Hide W."/>
            <person name="Bult C."/>
            <person name="Grimmond S.M."/>
            <person name="Teasdale R.D."/>
            <person name="Liu E.T."/>
            <person name="Brusic V."/>
            <person name="Quackenbush J."/>
            <person name="Wahlestedt C."/>
            <person name="Mattick J.S."/>
            <person name="Hume D.A."/>
            <person name="Kai C."/>
            <person name="Sasaki D."/>
            <person name="Tomaru Y."/>
            <person name="Fukuda S."/>
            <person name="Kanamori-Katayama M."/>
            <person name="Suzuki M."/>
            <person name="Aoki J."/>
            <person name="Arakawa T."/>
            <person name="Iida J."/>
            <person name="Imamura K."/>
            <person name="Itoh M."/>
            <person name="Kato T."/>
            <person name="Kawaji H."/>
            <person name="Kawagashira N."/>
            <person name="Kawashima T."/>
            <person name="Kojima M."/>
            <person name="Kondo S."/>
            <person name="Konno H."/>
            <person name="Nakano K."/>
            <person name="Ninomiya N."/>
            <person name="Nishio T."/>
            <person name="Okada M."/>
            <person name="Plessy C."/>
            <person name="Shibata K."/>
            <person name="Shiraki T."/>
            <person name="Suzuki S."/>
            <person name="Tagami M."/>
            <person name="Waki K."/>
            <person name="Watahiki A."/>
            <person name="Okamura-Oho Y."/>
            <person name="Suzuki H."/>
            <person name="Kawai J."/>
            <person name="Hayashizaki Y."/>
        </authorList>
    </citation>
    <scope>NUCLEOTIDE SEQUENCE [LARGE SCALE MRNA] (ISOFORMS 1 AND 2)</scope>
    <source>
        <strain evidence="10">C57BL/6J</strain>
        <strain evidence="13">NOD</strain>
        <tissue evidence="14">Bone marrow</tissue>
        <tissue evidence="11">Brain cortex</tissue>
        <tissue evidence="12">Pancreas</tissue>
        <tissue evidence="10">Testis</tissue>
        <tissue evidence="13">Thymus</tissue>
    </source>
</reference>
<reference evidence="15" key="3">
    <citation type="journal article" date="2009" name="PLoS Biol.">
        <title>Lineage-specific biology revealed by a finished genome assembly of the mouse.</title>
        <authorList>
            <person name="Church D.M."/>
            <person name="Goodstadt L."/>
            <person name="Hillier L.W."/>
            <person name="Zody M.C."/>
            <person name="Goldstein S."/>
            <person name="She X."/>
            <person name="Bult C.J."/>
            <person name="Agarwala R."/>
            <person name="Cherry J.L."/>
            <person name="DiCuccio M."/>
            <person name="Hlavina W."/>
            <person name="Kapustin Y."/>
            <person name="Meric P."/>
            <person name="Maglott D."/>
            <person name="Birtle Z."/>
            <person name="Marques A.C."/>
            <person name="Graves T."/>
            <person name="Zhou S."/>
            <person name="Teague B."/>
            <person name="Potamousis K."/>
            <person name="Churas C."/>
            <person name="Place M."/>
            <person name="Herschleb J."/>
            <person name="Runnheim R."/>
            <person name="Forrest D."/>
            <person name="Amos-Landgraf J."/>
            <person name="Schwartz D.C."/>
            <person name="Cheng Z."/>
            <person name="Lindblad-Toh K."/>
            <person name="Eichler E.E."/>
            <person name="Ponting C.P."/>
        </authorList>
    </citation>
    <scope>NUCLEOTIDE SEQUENCE [LARGE SCALE GENOMIC DNA]</scope>
    <source>
        <strain evidence="15">C57BL/6J</strain>
    </source>
</reference>
<reference evidence="9" key="4">
    <citation type="journal article" date="2004" name="Genome Res.">
        <title>The status, quality, and expansion of the NIH full-length cDNA project: the Mammalian Gene Collection (MGC).</title>
        <authorList>
            <consortium name="The MGC Project Team"/>
        </authorList>
    </citation>
    <scope>NUCLEOTIDE SEQUENCE [LARGE SCALE MRNA] (ISOFORM 1)</scope>
    <source>
        <strain evidence="9">FVB/N</strain>
        <tissue evidence="9">Mammary tumor</tissue>
    </source>
</reference>
<reference key="5">
    <citation type="submission" date="2008-02" db="UniProtKB">
        <authorList>
            <person name="Bienvenut W.V."/>
            <person name="Sandilands E."/>
            <person name="Serrels B."/>
            <person name="Brunton V.G."/>
            <person name="Frame M.C."/>
        </authorList>
    </citation>
    <scope>PROTEIN SEQUENCE OF 1-14 AND 84-91</scope>
    <scope>ACETYLATION AT MET-1</scope>
    <scope>IDENTIFICATION BY MASS SPECTROMETRY</scope>
    <source>
        <tissue>Embryonic fibroblast</tissue>
    </source>
</reference>
<reference key="6">
    <citation type="journal article" date="2001" name="J. Cell Biol.">
        <title>Raver1, a dual compartment protein, is a ligand for PTB/hnRNPI and microfilament attachment proteins.</title>
        <authorList>
            <person name="Huettelmaier S."/>
            <person name="Illenberger S."/>
            <person name="Grosheva I."/>
            <person name="Ruediger M."/>
            <person name="Singer R.H."/>
            <person name="Jockusch B.M."/>
        </authorList>
    </citation>
    <scope>INTERACTION WITH RAVER1</scope>
</reference>
<reference key="7">
    <citation type="journal article" date="2010" name="Cell">
        <title>A tissue-specific atlas of mouse protein phosphorylation and expression.</title>
        <authorList>
            <person name="Huttlin E.L."/>
            <person name="Jedrychowski M.P."/>
            <person name="Elias J.E."/>
            <person name="Goswami T."/>
            <person name="Rad R."/>
            <person name="Beausoleil S.A."/>
            <person name="Villen J."/>
            <person name="Haas W."/>
            <person name="Sowa M.E."/>
            <person name="Gygi S.P."/>
        </authorList>
    </citation>
    <scope>PHOSPHORYLATION [LARGE SCALE ANALYSIS] AT SER-16</scope>
    <scope>IDENTIFICATION BY MASS SPECTROMETRY [LARGE SCALE ANALYSIS]</scope>
    <source>
        <tissue>Brown adipose tissue</tissue>
        <tissue>Heart</tissue>
        <tissue>Kidney</tissue>
        <tissue>Liver</tissue>
        <tissue>Lung</tissue>
        <tissue>Pancreas</tissue>
        <tissue>Spleen</tissue>
        <tissue>Testis</tissue>
    </source>
</reference>
<reference key="8">
    <citation type="journal article" date="2011" name="J. Cell Biol.">
        <title>RBM4 down-regulates PTB and antagonizes its activity in muscle cell-specific alternative splicing.</title>
        <authorList>
            <person name="Lin J.C."/>
            <person name="Tarn W.Y."/>
        </authorList>
    </citation>
    <scope>TISSUE SPECIFICITY</scope>
</reference>
<organism>
    <name type="scientific">Mus musculus</name>
    <name type="common">Mouse</name>
    <dbReference type="NCBI Taxonomy" id="10090"/>
    <lineage>
        <taxon>Eukaryota</taxon>
        <taxon>Metazoa</taxon>
        <taxon>Chordata</taxon>
        <taxon>Craniata</taxon>
        <taxon>Vertebrata</taxon>
        <taxon>Euteleostomi</taxon>
        <taxon>Mammalia</taxon>
        <taxon>Eutheria</taxon>
        <taxon>Euarchontoglires</taxon>
        <taxon>Glires</taxon>
        <taxon>Rodentia</taxon>
        <taxon>Myomorpha</taxon>
        <taxon>Muroidea</taxon>
        <taxon>Muridae</taxon>
        <taxon>Murinae</taxon>
        <taxon>Mus</taxon>
        <taxon>Mus</taxon>
    </lineage>
</organism>
<sequence length="555" mass="59322">MDGIVPDIAVGTKRGSDELFSTCVSNGPFIMSSSASAANGNDSKKFKGDNRSAGVPSRVIHVRKLPSDVTEGEVISLGLPFGKVTNLLMLKGKNQAFIEMNTEEAANTMVNYYTSVAPVLRGQPIYIQFSNHKELKTDSSPNQARAQAALQAVNSVQSGNLALAASAAAVDAGMAMAGQSPVLRIIVENLFYPVTLDVLHQIFSKFGTVLKIITFTKNNQFQALLQYADPVSAQHAKLSLDGQNIYNACCTLRIDFSKLTSLNVKYNNDKSRDYTRPDLPSGDSQPSLDQTMAAAFGAPGIMSASPYAGAGFPPTFAIPQAAGLSVPNVHGALAPLAIPSAAAAAAASRIAIPGLAGAGNSVLLVSNLNPERVTPQSLFILFGVYGDVQRVKILFNKKENALVQMADGSQAQLAMSHLNGHKLHGKSVRITLSKHQSVQLPREGQEDQGLTKDYGSSPLHRFKKPGSKNFQNIFPPSATLHLSNIPPSVSEDDLKSLFSSNGGVVKGFKFFQKDRKMALIQMGSVEEAVQALIELHNHDLGENHHLRVSFSKSTI</sequence>
<comment type="function">
    <text evidence="2">Plays a role in pre-mRNA splicing and in the regulation of alternative splicing events. Activates exon skipping of its own pre-mRNA during muscle cell differentiation. Binds to the polypyrimidine tract of introns. May promote RNA looping when bound to two separate polypyrimidine tracts in the same pre-mRNA. May promote the binding of U2 snRNP to pre-mRNA. Cooperates with RAVER1 to modulate switching between mutually exclusive exons during maturation of the TPM1 pre-mRNA. Represses the splicing of MAPT/Tau exon 10. Binds to polypyrimidine-rich controlling element (PCE) of CFTR and promotes exon skipping of CFTR exon 9, thereby antagonizing TIA1 and its role in exon inclusion of CFTR exon 9. Plays a role in the splicing of pyruvate kinase PKM by binding repressively to a polypyrimidine tract flanking PKM exon 9, inhibiting exon 9 inclusion and resulting in exon 10 inclusion and production of the PKM M2 isoform.</text>
</comment>
<comment type="subunit">
    <text evidence="1 2 5">Monomer. Part of a ternary complex containing KHSRP, PTBP1, PTBP2 and HNRPH1. Interacts with SFPQ (By similarity). Interacts with RAVER1. Interacts with IVNS1ABP (via BACK domain); the interaction is direct (By similarity).</text>
</comment>
<comment type="subcellular location">
    <subcellularLocation>
        <location>Nucleus</location>
    </subcellularLocation>
</comment>
<comment type="alternative products">
    <event type="alternative splicing"/>
    <isoform>
        <id>P17225-1</id>
        <name>1</name>
        <sequence type="displayed"/>
    </isoform>
    <isoform>
        <id>P17225-2</id>
        <name>2</name>
        <sequence type="described" ref="VSP_061654"/>
    </isoform>
</comment>
<comment type="tissue specificity">
    <text evidence="6">Expressed in myoblast; expression gradually decreases during muscle cell differentiation (at protein level).</text>
</comment>
<comment type="domain">
    <text>The C-terminal 195 amino acids of PTB are sufficient for specific RNA binding.</text>
</comment>
<comment type="sequence caution" evidence="8">
    <conflict type="frameshift">
        <sequence resource="EMBL-CDS" id="CAA36321"/>
    </conflict>
</comment>
<name>PTBP1_MOUSE</name>
<evidence type="ECO:0000250" key="1"/>
<evidence type="ECO:0000250" key="2">
    <source>
        <dbReference type="UniProtKB" id="P26599"/>
    </source>
</evidence>
<evidence type="ECO:0000255" key="3">
    <source>
        <dbReference type="PROSITE-ProRule" id="PRU00176"/>
    </source>
</evidence>
<evidence type="ECO:0000256" key="4">
    <source>
        <dbReference type="SAM" id="MobiDB-lite"/>
    </source>
</evidence>
<evidence type="ECO:0000269" key="5">
    <source>
    </source>
</evidence>
<evidence type="ECO:0000269" key="6">
    <source>
    </source>
</evidence>
<evidence type="ECO:0000269" key="7">
    <source ref="5"/>
</evidence>
<evidence type="ECO:0000305" key="8"/>
<evidence type="ECO:0000312" key="9">
    <source>
        <dbReference type="EMBL" id="AAH07472.1"/>
    </source>
</evidence>
<evidence type="ECO:0000312" key="10">
    <source>
        <dbReference type="EMBL" id="BAC28230.1"/>
    </source>
</evidence>
<evidence type="ECO:0000312" key="11">
    <source>
        <dbReference type="EMBL" id="BAC31665.1"/>
    </source>
</evidence>
<evidence type="ECO:0000312" key="12">
    <source>
        <dbReference type="EMBL" id="BAC34292.1"/>
    </source>
</evidence>
<evidence type="ECO:0000312" key="13">
    <source>
        <dbReference type="EMBL" id="BAC40383.1"/>
    </source>
</evidence>
<evidence type="ECO:0000312" key="14">
    <source>
        <dbReference type="EMBL" id="BAE30277.1"/>
    </source>
</evidence>
<evidence type="ECO:0000312" key="15">
    <source>
        <dbReference type="Proteomes" id="UP000000589"/>
    </source>
</evidence>
<evidence type="ECO:0007744" key="16">
    <source>
    </source>
</evidence>
<dbReference type="EMBL" id="X52101">
    <property type="protein sequence ID" value="CAA36321.1"/>
    <property type="status" value="ALT_FRAME"/>
    <property type="molecule type" value="mRNA"/>
</dbReference>
<dbReference type="EMBL" id="AK033319">
    <property type="protein sequence ID" value="BAC28230.1"/>
    <property type="molecule type" value="mRNA"/>
</dbReference>
<dbReference type="EMBL" id="AK041143">
    <property type="protein sequence ID" value="BAC30837.1"/>
    <property type="molecule type" value="mRNA"/>
</dbReference>
<dbReference type="EMBL" id="AK043824">
    <property type="protein sequence ID" value="BAC31665.1"/>
    <property type="molecule type" value="mRNA"/>
</dbReference>
<dbReference type="EMBL" id="AK044956">
    <property type="protein sequence ID" value="BAC32158.1"/>
    <property type="molecule type" value="mRNA"/>
</dbReference>
<dbReference type="EMBL" id="AK050498">
    <property type="protein sequence ID" value="BAC34292.1"/>
    <property type="molecule type" value="mRNA"/>
</dbReference>
<dbReference type="EMBL" id="AK051669">
    <property type="protein sequence ID" value="BAC34712.1"/>
    <property type="molecule type" value="mRNA"/>
</dbReference>
<dbReference type="EMBL" id="AK082600">
    <property type="protein sequence ID" value="BAC38544.1"/>
    <property type="molecule type" value="mRNA"/>
</dbReference>
<dbReference type="EMBL" id="AK088483">
    <property type="protein sequence ID" value="BAC40383.1"/>
    <property type="molecule type" value="mRNA"/>
</dbReference>
<dbReference type="EMBL" id="AK149941">
    <property type="protein sequence ID" value="BAE29183.1"/>
    <property type="molecule type" value="mRNA"/>
</dbReference>
<dbReference type="EMBL" id="AK151292">
    <property type="protein sequence ID" value="BAE30277.1"/>
    <property type="molecule type" value="mRNA"/>
</dbReference>
<dbReference type="EMBL" id="AK168359">
    <property type="protein sequence ID" value="BAE40295.1"/>
    <property type="molecule type" value="mRNA"/>
</dbReference>
<dbReference type="EMBL" id="BC007472">
    <property type="protein sequence ID" value="AAH07472.1"/>
    <property type="molecule type" value="mRNA"/>
</dbReference>
<dbReference type="CCDS" id="CCDS35969.1">
    <molecule id="P17225-1"/>
</dbReference>
<dbReference type="CCDS" id="CCDS35970.1">
    <molecule id="P17225-2"/>
</dbReference>
<dbReference type="RefSeq" id="NP_001070831.1">
    <molecule id="P17225-1"/>
    <property type="nucleotide sequence ID" value="NM_001077363.3"/>
</dbReference>
<dbReference type="RefSeq" id="NP_032982.2">
    <molecule id="P17225-2"/>
    <property type="nucleotide sequence ID" value="NM_008956.4"/>
</dbReference>
<dbReference type="BMRB" id="P17225"/>
<dbReference type="SMR" id="P17225"/>
<dbReference type="CORUM" id="P17225"/>
<dbReference type="FunCoup" id="P17225">
    <property type="interactions" value="3126"/>
</dbReference>
<dbReference type="IntAct" id="P17225">
    <property type="interactions" value="6"/>
</dbReference>
<dbReference type="MINT" id="P17225"/>
<dbReference type="STRING" id="10090.ENSMUSP00000126192"/>
<dbReference type="GlyGen" id="P17225">
    <property type="glycosylation" value="2 sites, 1 N-linked glycan (1 site), 1 O-linked glycan (1 site)"/>
</dbReference>
<dbReference type="iPTMnet" id="P17225"/>
<dbReference type="PhosphoSitePlus" id="P17225"/>
<dbReference type="SwissPalm" id="P17225"/>
<dbReference type="jPOST" id="P17225"/>
<dbReference type="PaxDb" id="10090-ENSMUSP00000126192"/>
<dbReference type="PeptideAtlas" id="P17225"/>
<dbReference type="ProteomicsDB" id="291581"/>
<dbReference type="ProteomicsDB" id="332635"/>
<dbReference type="ProteomicsDB" id="336752"/>
<dbReference type="Pumba" id="P17225"/>
<dbReference type="Antibodypedia" id="4613">
    <property type="antibodies" value="456 antibodies from 36 providers"/>
</dbReference>
<dbReference type="DNASU" id="19205"/>
<dbReference type="Ensembl" id="ENSMUST00000165704.8">
    <molecule id="P17225-2"/>
    <property type="protein sequence ID" value="ENSMUSP00000127783.2"/>
    <property type="gene ID" value="ENSMUSG00000006498.17"/>
</dbReference>
<dbReference type="Ensembl" id="ENSMUST00000172282.8">
    <molecule id="P17225-1"/>
    <property type="protein sequence ID" value="ENSMUSP00000126192.2"/>
    <property type="gene ID" value="ENSMUSG00000006498.17"/>
</dbReference>
<dbReference type="GeneID" id="19205"/>
<dbReference type="KEGG" id="mmu:19205"/>
<dbReference type="AGR" id="MGI:97791"/>
<dbReference type="CTD" id="5725"/>
<dbReference type="MGI" id="MGI:97791">
    <property type="gene designation" value="Ptbp1"/>
</dbReference>
<dbReference type="VEuPathDB" id="HostDB:ENSMUSG00000006498"/>
<dbReference type="eggNOG" id="KOG1190">
    <property type="taxonomic scope" value="Eukaryota"/>
</dbReference>
<dbReference type="GeneTree" id="ENSGT01050000244924"/>
<dbReference type="InParanoid" id="P17225"/>
<dbReference type="OMA" id="NMIYPVT"/>
<dbReference type="OrthoDB" id="296632at2759"/>
<dbReference type="TreeFam" id="TF319824"/>
<dbReference type="Reactome" id="R-MMU-6803529">
    <property type="pathway name" value="FGFR2 alternative splicing"/>
</dbReference>
<dbReference type="Reactome" id="R-MMU-72163">
    <property type="pathway name" value="mRNA Splicing - Major Pathway"/>
</dbReference>
<dbReference type="Reactome" id="R-MMU-72203">
    <property type="pathway name" value="Processing of Capped Intron-Containing Pre-mRNA"/>
</dbReference>
<dbReference type="BioGRID-ORCS" id="19205">
    <property type="hits" value="28 hits in 112 CRISPR screens"/>
</dbReference>
<dbReference type="CD-CODE" id="D12E4DB9">
    <property type="entry name" value="Stress granule"/>
</dbReference>
<dbReference type="ChiTaRS" id="Ptbp1">
    <property type="organism name" value="mouse"/>
</dbReference>
<dbReference type="PRO" id="PR:P17225"/>
<dbReference type="Proteomes" id="UP000000589">
    <property type="component" value="Chromosome 10"/>
</dbReference>
<dbReference type="RNAct" id="P17225">
    <property type="molecule type" value="protein"/>
</dbReference>
<dbReference type="Bgee" id="ENSMUSG00000006498">
    <property type="expression patterns" value="Expressed in embryonic post-anal tail and 138 other cell types or tissues"/>
</dbReference>
<dbReference type="GO" id="GO:0005634">
    <property type="term" value="C:nucleus"/>
    <property type="evidence" value="ECO:0000314"/>
    <property type="project" value="MGI"/>
</dbReference>
<dbReference type="GO" id="GO:0036002">
    <property type="term" value="F:pre-mRNA binding"/>
    <property type="evidence" value="ECO:0007669"/>
    <property type="project" value="Ensembl"/>
</dbReference>
<dbReference type="GO" id="GO:0003723">
    <property type="term" value="F:RNA binding"/>
    <property type="evidence" value="ECO:0000353"/>
    <property type="project" value="MGI"/>
</dbReference>
<dbReference type="GO" id="GO:0010467">
    <property type="term" value="P:gene expression"/>
    <property type="evidence" value="ECO:0000315"/>
    <property type="project" value="MGI"/>
</dbReference>
<dbReference type="GO" id="GO:0075522">
    <property type="term" value="P:IRES-dependent viral translational initiation"/>
    <property type="evidence" value="ECO:0007669"/>
    <property type="project" value="Ensembl"/>
</dbReference>
<dbReference type="GO" id="GO:0006397">
    <property type="term" value="P:mRNA processing"/>
    <property type="evidence" value="ECO:0007669"/>
    <property type="project" value="UniProtKB-KW"/>
</dbReference>
<dbReference type="GO" id="GO:0048025">
    <property type="term" value="P:negative regulation of mRNA splicing, via spliceosome"/>
    <property type="evidence" value="ECO:0000314"/>
    <property type="project" value="ARUK-UCL"/>
</dbReference>
<dbReference type="GO" id="GO:0051148">
    <property type="term" value="P:negative regulation of muscle cell differentiation"/>
    <property type="evidence" value="ECO:0000250"/>
    <property type="project" value="UniProtKB"/>
</dbReference>
<dbReference type="GO" id="GO:0045665">
    <property type="term" value="P:negative regulation of neuron differentiation"/>
    <property type="evidence" value="ECO:0000314"/>
    <property type="project" value="ARUK-UCL"/>
</dbReference>
<dbReference type="GO" id="GO:0022008">
    <property type="term" value="P:neurogenesis"/>
    <property type="evidence" value="ECO:0000315"/>
    <property type="project" value="MGI"/>
</dbReference>
<dbReference type="GO" id="GO:0070886">
    <property type="term" value="P:positive regulation of calcineurin-NFAT signaling cascade"/>
    <property type="evidence" value="ECO:0007669"/>
    <property type="project" value="Ensembl"/>
</dbReference>
<dbReference type="GO" id="GO:0045944">
    <property type="term" value="P:positive regulation of transcription by RNA polymerase II"/>
    <property type="evidence" value="ECO:0000316"/>
    <property type="project" value="MGI"/>
</dbReference>
<dbReference type="GO" id="GO:0000381">
    <property type="term" value="P:regulation of alternative mRNA splicing, via spliceosome"/>
    <property type="evidence" value="ECO:0000250"/>
    <property type="project" value="UniProtKB"/>
</dbReference>
<dbReference type="GO" id="GO:0008380">
    <property type="term" value="P:RNA splicing"/>
    <property type="evidence" value="ECO:0007669"/>
    <property type="project" value="UniProtKB-KW"/>
</dbReference>
<dbReference type="CDD" id="cd12777">
    <property type="entry name" value="RRM1_PTBP1"/>
    <property type="match status" value="1"/>
</dbReference>
<dbReference type="CDD" id="cd12693">
    <property type="entry name" value="RRM2_PTBP1_like"/>
    <property type="match status" value="1"/>
</dbReference>
<dbReference type="CDD" id="cd12695">
    <property type="entry name" value="RRM3_PTBP1"/>
    <property type="match status" value="1"/>
</dbReference>
<dbReference type="FunFam" id="3.30.70.330:FF:000036">
    <property type="entry name" value="polypyrimidine tract-binding protein 1 isoform X2"/>
    <property type="match status" value="1"/>
</dbReference>
<dbReference type="FunFam" id="3.30.70.330:FF:000162">
    <property type="entry name" value="polypyrimidine tract-binding protein 1 isoform X2"/>
    <property type="match status" value="1"/>
</dbReference>
<dbReference type="FunFam" id="3.30.70.330:FF:000018">
    <property type="entry name" value="Polypyrimidine tract-binding protein 2 isoform 1"/>
    <property type="match status" value="1"/>
</dbReference>
<dbReference type="FunFam" id="3.30.70.330:FF:000032">
    <property type="entry name" value="Polypyrimidine tract-binding protein 2 isoform 1"/>
    <property type="match status" value="1"/>
</dbReference>
<dbReference type="Gene3D" id="3.30.70.330">
    <property type="match status" value="4"/>
</dbReference>
<dbReference type="InterPro" id="IPR006536">
    <property type="entry name" value="HnRNP-L/PTB"/>
</dbReference>
<dbReference type="InterPro" id="IPR012677">
    <property type="entry name" value="Nucleotide-bd_a/b_plait_sf"/>
</dbReference>
<dbReference type="InterPro" id="IPR021790">
    <property type="entry name" value="PTBP1-like_RRM2"/>
</dbReference>
<dbReference type="InterPro" id="IPR035000">
    <property type="entry name" value="PTBP1_RRM1"/>
</dbReference>
<dbReference type="InterPro" id="IPR035001">
    <property type="entry name" value="PTBP1_RRM3"/>
</dbReference>
<dbReference type="InterPro" id="IPR035979">
    <property type="entry name" value="RBD_domain_sf"/>
</dbReference>
<dbReference type="InterPro" id="IPR000504">
    <property type="entry name" value="RRM_dom"/>
</dbReference>
<dbReference type="NCBIfam" id="TIGR01649">
    <property type="entry name" value="hnRNP-L_PTB"/>
    <property type="match status" value="1"/>
</dbReference>
<dbReference type="PANTHER" id="PTHR15592">
    <property type="entry name" value="MATRIN 3/NUCLEAR PROTEIN 220-RELATED"/>
    <property type="match status" value="1"/>
</dbReference>
<dbReference type="Pfam" id="PF00076">
    <property type="entry name" value="RRM_1"/>
    <property type="match status" value="1"/>
</dbReference>
<dbReference type="Pfam" id="PF13893">
    <property type="entry name" value="RRM_5"/>
    <property type="match status" value="2"/>
</dbReference>
<dbReference type="Pfam" id="PF11835">
    <property type="entry name" value="RRM_8"/>
    <property type="match status" value="1"/>
</dbReference>
<dbReference type="SMART" id="SM00360">
    <property type="entry name" value="RRM"/>
    <property type="match status" value="4"/>
</dbReference>
<dbReference type="SUPFAM" id="SSF54928">
    <property type="entry name" value="RNA-binding domain, RBD"/>
    <property type="match status" value="4"/>
</dbReference>
<dbReference type="PROSITE" id="PS50102">
    <property type="entry name" value="RRM"/>
    <property type="match status" value="4"/>
</dbReference>
<feature type="chain" id="PRO_0000081738" description="Polypyrimidine tract-binding protein 1">
    <location>
        <begin position="1"/>
        <end position="555"/>
    </location>
</feature>
<feature type="domain" description="RRM 1" evidence="3">
    <location>
        <begin position="58"/>
        <end position="142"/>
    </location>
</feature>
<feature type="domain" description="RRM 2" evidence="3">
    <location>
        <begin position="183"/>
        <end position="259"/>
    </location>
</feature>
<feature type="domain" description="RRM 3" evidence="3">
    <location>
        <begin position="361"/>
        <end position="412"/>
    </location>
</feature>
<feature type="domain" description="RRM 4" evidence="3">
    <location>
        <begin position="478"/>
        <end position="553"/>
    </location>
</feature>
<feature type="region of interest" description="Disordered" evidence="4">
    <location>
        <begin position="435"/>
        <end position="457"/>
    </location>
</feature>
<feature type="modified residue" description="N-acetylmethionine" evidence="7">
    <location>
        <position position="1"/>
    </location>
</feature>
<feature type="modified residue" description="Phosphoserine" evidence="16">
    <location>
        <position position="16"/>
    </location>
</feature>
<feature type="modified residue" description="Phosphotyrosine" evidence="2">
    <location>
        <position position="126"/>
    </location>
</feature>
<feature type="modified residue" description="Phosphothreonine" evidence="2">
    <location>
        <position position="137"/>
    </location>
</feature>
<feature type="modified residue" description="Phosphoserine" evidence="2">
    <location>
        <position position="140"/>
    </location>
</feature>
<feature type="modified residue" description="Phosphoserine" evidence="2">
    <location>
        <position position="457"/>
    </location>
</feature>
<feature type="cross-link" description="Glycyl lysine isopeptide (Lys-Gly) (interchain with G-Cter in SUMO2)" evidence="2">
    <location>
        <position position="64"/>
    </location>
</feature>
<feature type="cross-link" description="Glycyl lysine isopeptide (Lys-Gly) (interchain with G-Cter in SUMO2)" evidence="2">
    <location>
        <position position="217"/>
    </location>
</feature>
<feature type="splice variant" id="VSP_061654" description="In isoform 2.">
    <location>
        <begin position="297"/>
        <end position="322"/>
    </location>
</feature>
<proteinExistence type="evidence at protein level"/>
<gene>
    <name type="primary">Ptbp1</name>
    <name type="synonym">Ptb</name>
</gene>
<accession>P17225</accession>
<accession>Q8BGJ5</accession>
<accession>Q922I7</accession>
<protein>
    <recommendedName>
        <fullName>Polypyrimidine tract-binding protein 1</fullName>
        <shortName>PTB</shortName>
    </recommendedName>
    <alternativeName>
        <fullName>Heterogeneous nuclear ribonucleoprotein I</fullName>
        <shortName>hnRNP I</shortName>
    </alternativeName>
</protein>
<keyword id="KW-0007">Acetylation</keyword>
<keyword id="KW-0010">Activator</keyword>
<keyword id="KW-0025">Alternative splicing</keyword>
<keyword id="KW-0903">Direct protein sequencing</keyword>
<keyword id="KW-1017">Isopeptide bond</keyword>
<keyword id="KW-0507">mRNA processing</keyword>
<keyword id="KW-0508">mRNA splicing</keyword>
<keyword id="KW-0539">Nucleus</keyword>
<keyword id="KW-0597">Phosphoprotein</keyword>
<keyword id="KW-1185">Reference proteome</keyword>
<keyword id="KW-0677">Repeat</keyword>
<keyword id="KW-0678">Repressor</keyword>
<keyword id="KW-0694">RNA-binding</keyword>
<keyword id="KW-0832">Ubl conjugation</keyword>